<gene>
    <name evidence="1" type="primary">ygfB</name>
    <name type="ordered locus">ECS88_3189</name>
</gene>
<dbReference type="EMBL" id="CU928161">
    <property type="protein sequence ID" value="CAR04424.1"/>
    <property type="molecule type" value="Genomic_DNA"/>
</dbReference>
<dbReference type="RefSeq" id="WP_001295378.1">
    <property type="nucleotide sequence ID" value="NC_011742.1"/>
</dbReference>
<dbReference type="SMR" id="B7MM95"/>
<dbReference type="GeneID" id="93779092"/>
<dbReference type="KEGG" id="ecz:ECS88_3189"/>
<dbReference type="HOGENOM" id="CLU_085336_1_0_6"/>
<dbReference type="Proteomes" id="UP000000747">
    <property type="component" value="Chromosome"/>
</dbReference>
<dbReference type="GO" id="GO:0005829">
    <property type="term" value="C:cytosol"/>
    <property type="evidence" value="ECO:0007669"/>
    <property type="project" value="TreeGrafter"/>
</dbReference>
<dbReference type="FunFam" id="1.20.120.740:FF:000001">
    <property type="entry name" value="UPF0149 protein YgfB"/>
    <property type="match status" value="1"/>
</dbReference>
<dbReference type="Gene3D" id="1.20.120.740">
    <property type="entry name" value="YgfB uncharacterised protein family UPF0149, PF03695"/>
    <property type="match status" value="1"/>
</dbReference>
<dbReference type="HAMAP" id="MF_00346">
    <property type="entry name" value="UPF0149"/>
    <property type="match status" value="1"/>
</dbReference>
<dbReference type="InterPro" id="IPR011978">
    <property type="entry name" value="YgfB-like"/>
</dbReference>
<dbReference type="InterPro" id="IPR036255">
    <property type="entry name" value="YgfB-like_sf"/>
</dbReference>
<dbReference type="NCBIfam" id="NF002477">
    <property type="entry name" value="PRK01736.1"/>
    <property type="match status" value="1"/>
</dbReference>
<dbReference type="NCBIfam" id="TIGR02292">
    <property type="entry name" value="ygfB_yecA"/>
    <property type="match status" value="1"/>
</dbReference>
<dbReference type="PANTHER" id="PTHR37528">
    <property type="entry name" value="UPF0149 PROTEIN YGFB"/>
    <property type="match status" value="1"/>
</dbReference>
<dbReference type="PANTHER" id="PTHR37528:SF1">
    <property type="entry name" value="UPF0149 PROTEIN YGFB"/>
    <property type="match status" value="1"/>
</dbReference>
<dbReference type="Pfam" id="PF03695">
    <property type="entry name" value="UPF0149"/>
    <property type="match status" value="1"/>
</dbReference>
<dbReference type="SUPFAM" id="SSF101327">
    <property type="entry name" value="YgfB-like"/>
    <property type="match status" value="1"/>
</dbReference>
<evidence type="ECO:0000255" key="1">
    <source>
        <dbReference type="HAMAP-Rule" id="MF_00346"/>
    </source>
</evidence>
<organism>
    <name type="scientific">Escherichia coli O45:K1 (strain S88 / ExPEC)</name>
    <dbReference type="NCBI Taxonomy" id="585035"/>
    <lineage>
        <taxon>Bacteria</taxon>
        <taxon>Pseudomonadati</taxon>
        <taxon>Pseudomonadota</taxon>
        <taxon>Gammaproteobacteria</taxon>
        <taxon>Enterobacterales</taxon>
        <taxon>Enterobacteriaceae</taxon>
        <taxon>Escherichia</taxon>
    </lineage>
</organism>
<name>YGFB_ECO45</name>
<reference key="1">
    <citation type="journal article" date="2009" name="PLoS Genet.">
        <title>Organised genome dynamics in the Escherichia coli species results in highly diverse adaptive paths.</title>
        <authorList>
            <person name="Touchon M."/>
            <person name="Hoede C."/>
            <person name="Tenaillon O."/>
            <person name="Barbe V."/>
            <person name="Baeriswyl S."/>
            <person name="Bidet P."/>
            <person name="Bingen E."/>
            <person name="Bonacorsi S."/>
            <person name="Bouchier C."/>
            <person name="Bouvet O."/>
            <person name="Calteau A."/>
            <person name="Chiapello H."/>
            <person name="Clermont O."/>
            <person name="Cruveiller S."/>
            <person name="Danchin A."/>
            <person name="Diard M."/>
            <person name="Dossat C."/>
            <person name="Karoui M.E."/>
            <person name="Frapy E."/>
            <person name="Garry L."/>
            <person name="Ghigo J.M."/>
            <person name="Gilles A.M."/>
            <person name="Johnson J."/>
            <person name="Le Bouguenec C."/>
            <person name="Lescat M."/>
            <person name="Mangenot S."/>
            <person name="Martinez-Jehanne V."/>
            <person name="Matic I."/>
            <person name="Nassif X."/>
            <person name="Oztas S."/>
            <person name="Petit M.A."/>
            <person name="Pichon C."/>
            <person name="Rouy Z."/>
            <person name="Ruf C.S."/>
            <person name="Schneider D."/>
            <person name="Tourret J."/>
            <person name="Vacherie B."/>
            <person name="Vallenet D."/>
            <person name="Medigue C."/>
            <person name="Rocha E.P.C."/>
            <person name="Denamur E."/>
        </authorList>
    </citation>
    <scope>NUCLEOTIDE SEQUENCE [LARGE SCALE GENOMIC DNA]</scope>
    <source>
        <strain>S88 / ExPEC</strain>
    </source>
</reference>
<protein>
    <recommendedName>
        <fullName evidence="1">UPF0149 protein YgfB</fullName>
    </recommendedName>
</protein>
<comment type="similarity">
    <text evidence="1">Belongs to the UPF0149 family.</text>
</comment>
<feature type="chain" id="PRO_1000120466" description="UPF0149 protein YgfB">
    <location>
        <begin position="1"/>
        <end position="192"/>
    </location>
</feature>
<accession>B7MM95</accession>
<proteinExistence type="inferred from homology"/>
<sequence length="192" mass="21230">MSIQNEMPGYNEMNQYLNQQGTGLTPAEMHGLISGMICGGNDDSSWLPLLHDLTNEGMAFGHELAQALRKMHSATSDALQDDGFLFQLYLPDGDDVSVFDRADALAGWVNHFLLGLGVTQPKLDKVTGETGEAIDDLRNIAQLGYDEDEDQEELEMSLEEIIEYVRVAALLCHDTFTHPQPTAPEVQKPTLH</sequence>
<keyword id="KW-1185">Reference proteome</keyword>